<gene>
    <name type="primary">Cabp5</name>
</gene>
<sequence>MQFPMGPACIFLRKGIAEKQRERPLGQDELDELREAFLEFDKDQDGFISYKDLGNLMRTMGYMPTEMELTELGQQIRMNLGGRVDFEDFVELMTPKLLAETAGMIGVQEMRDAFKEFDANGDGEITLAELQQAMQRLLGEKLTPREIAEVVQEADINGDGTVDFEEFVKMMSR</sequence>
<protein>
    <recommendedName>
        <fullName>Calcium-binding protein 5</fullName>
        <shortName>CaBP5</shortName>
    </recommendedName>
</protein>
<feature type="chain" id="PRO_0000073525" description="Calcium-binding protein 5">
    <location>
        <begin position="1"/>
        <end position="173"/>
    </location>
</feature>
<feature type="domain" description="EF-hand 1" evidence="3">
    <location>
        <begin position="28"/>
        <end position="63"/>
    </location>
</feature>
<feature type="domain" description="EF-hand 2" evidence="3">
    <location>
        <begin position="82"/>
        <end position="99"/>
    </location>
</feature>
<feature type="domain" description="EF-hand 3" evidence="3">
    <location>
        <begin position="105"/>
        <end position="140"/>
    </location>
</feature>
<feature type="domain" description="EF-hand 4" evidence="3">
    <location>
        <begin position="142"/>
        <end position="173"/>
    </location>
</feature>
<feature type="binding site" evidence="3">
    <location>
        <position position="41"/>
    </location>
    <ligand>
        <name>Ca(2+)</name>
        <dbReference type="ChEBI" id="CHEBI:29108"/>
        <label>1</label>
    </ligand>
</feature>
<feature type="binding site" evidence="3">
    <location>
        <position position="43"/>
    </location>
    <ligand>
        <name>Ca(2+)</name>
        <dbReference type="ChEBI" id="CHEBI:29108"/>
        <label>1</label>
    </ligand>
</feature>
<feature type="binding site" evidence="3">
    <location>
        <position position="45"/>
    </location>
    <ligand>
        <name>Ca(2+)</name>
        <dbReference type="ChEBI" id="CHEBI:29108"/>
        <label>1</label>
    </ligand>
</feature>
<feature type="binding site" evidence="3">
    <location>
        <position position="52"/>
    </location>
    <ligand>
        <name>Ca(2+)</name>
        <dbReference type="ChEBI" id="CHEBI:29108"/>
        <label>1</label>
    </ligand>
</feature>
<feature type="binding site" evidence="3">
    <location>
        <position position="118"/>
    </location>
    <ligand>
        <name>Ca(2+)</name>
        <dbReference type="ChEBI" id="CHEBI:29108"/>
        <label>2</label>
    </ligand>
</feature>
<feature type="binding site" evidence="3">
    <location>
        <position position="120"/>
    </location>
    <ligand>
        <name>Ca(2+)</name>
        <dbReference type="ChEBI" id="CHEBI:29108"/>
        <label>2</label>
    </ligand>
</feature>
<feature type="binding site" evidence="3">
    <location>
        <position position="122"/>
    </location>
    <ligand>
        <name>Ca(2+)</name>
        <dbReference type="ChEBI" id="CHEBI:29108"/>
        <label>2</label>
    </ligand>
</feature>
<feature type="binding site" evidence="3">
    <location>
        <position position="124"/>
    </location>
    <ligand>
        <name>Ca(2+)</name>
        <dbReference type="ChEBI" id="CHEBI:29108"/>
        <label>2</label>
    </ligand>
</feature>
<feature type="binding site" evidence="3">
    <location>
        <position position="129"/>
    </location>
    <ligand>
        <name>Ca(2+)</name>
        <dbReference type="ChEBI" id="CHEBI:29108"/>
        <label>2</label>
    </ligand>
</feature>
<feature type="binding site" evidence="3">
    <location>
        <position position="155"/>
    </location>
    <ligand>
        <name>Ca(2+)</name>
        <dbReference type="ChEBI" id="CHEBI:29108"/>
        <label>3</label>
    </ligand>
</feature>
<feature type="binding site" evidence="3">
    <location>
        <position position="157"/>
    </location>
    <ligand>
        <name>Ca(2+)</name>
        <dbReference type="ChEBI" id="CHEBI:29108"/>
        <label>3</label>
    </ligand>
</feature>
<feature type="binding site" evidence="3">
    <location>
        <position position="159"/>
    </location>
    <ligand>
        <name>Ca(2+)</name>
        <dbReference type="ChEBI" id="CHEBI:29108"/>
        <label>3</label>
    </ligand>
</feature>
<feature type="binding site" evidence="3">
    <location>
        <position position="161"/>
    </location>
    <ligand>
        <name>Ca(2+)</name>
        <dbReference type="ChEBI" id="CHEBI:29108"/>
        <label>3</label>
    </ligand>
</feature>
<feature type="binding site" evidence="3">
    <location>
        <position position="166"/>
    </location>
    <ligand>
        <name>Ca(2+)</name>
        <dbReference type="ChEBI" id="CHEBI:29108"/>
        <label>3</label>
    </ligand>
</feature>
<accession>Q9JLK3</accession>
<organism>
    <name type="scientific">Mus musculus</name>
    <name type="common">Mouse</name>
    <dbReference type="NCBI Taxonomy" id="10090"/>
    <lineage>
        <taxon>Eukaryota</taxon>
        <taxon>Metazoa</taxon>
        <taxon>Chordata</taxon>
        <taxon>Craniata</taxon>
        <taxon>Vertebrata</taxon>
        <taxon>Euteleostomi</taxon>
        <taxon>Mammalia</taxon>
        <taxon>Eutheria</taxon>
        <taxon>Euarchontoglires</taxon>
        <taxon>Glires</taxon>
        <taxon>Rodentia</taxon>
        <taxon>Myomorpha</taxon>
        <taxon>Muroidea</taxon>
        <taxon>Muridae</taxon>
        <taxon>Murinae</taxon>
        <taxon>Mus</taxon>
        <taxon>Mus</taxon>
    </lineage>
</organism>
<name>CABP5_MOUSE</name>
<keyword id="KW-0106">Calcium</keyword>
<keyword id="KW-0963">Cytoplasm</keyword>
<keyword id="KW-0479">Metal-binding</keyword>
<keyword id="KW-1185">Reference proteome</keyword>
<keyword id="KW-0677">Repeat</keyword>
<comment type="function">
    <text evidence="5 6">Inhibits calcium-dependent inactivation of L-type calcium channel and shifts voltage dependence of activation to more depolarized membrane potentials (PubMed:18586882). Involved in the transmission of light signals (PubMed:18586882). May positively regulate neurotransmitter vesicle endocytosis and exocytosis in a salt-dependent manner (PubMed:22039235). May play a role in the extension and network organization of neurites (PubMed:22039235).</text>
</comment>
<comment type="subunit">
    <text evidence="1 5">Interacts with CACNA1C (via C-terminal CDB motif) in a calcium-dependent manner (PubMed:18586882). Interacts with STXBP1 (By similarity). Interacts with MYO6 (By similarity).</text>
</comment>
<comment type="subcellular location">
    <subcellularLocation>
        <location evidence="2">Cytoplasm</location>
    </subcellularLocation>
</comment>
<comment type="tissue specificity">
    <text evidence="4 5 6">Expressed in inner and outer plexiform layers of the retina, and retinal bipolar cells (at protein level) (PubMed:17947313, PubMed:18586882, PubMed:22039235). Expressed in the inner hair cells (IHC) of the cochlea (PubMed:17947313, PubMed:18586882).</text>
</comment>
<comment type="disruption phenotype">
    <text evidence="5">No morphologic changes, but 50% reduction of the sensitivity of retinal ganglion cell light responses.</text>
</comment>
<evidence type="ECO:0000250" key="1">
    <source>
        <dbReference type="UniProtKB" id="Q9N1Q8"/>
    </source>
</evidence>
<evidence type="ECO:0000250" key="2">
    <source>
        <dbReference type="UniProtKB" id="Q9NP86"/>
    </source>
</evidence>
<evidence type="ECO:0000255" key="3">
    <source>
        <dbReference type="PROSITE-ProRule" id="PRU00448"/>
    </source>
</evidence>
<evidence type="ECO:0000269" key="4">
    <source>
    </source>
</evidence>
<evidence type="ECO:0000269" key="5">
    <source>
    </source>
</evidence>
<evidence type="ECO:0000269" key="6">
    <source>
    </source>
</evidence>
<reference key="1">
    <citation type="journal article" date="2000" name="J. Biol. Chem.">
        <title>Five members of a novel Ca(2+)-binding protein (CABP) subfamily with similarity to calmodulin.</title>
        <authorList>
            <person name="Haeseleer F."/>
            <person name="Sokal I."/>
            <person name="Verlinde C.L.M.J."/>
            <person name="Erdjument-Bromage H."/>
            <person name="Tempst P."/>
            <person name="Pronin A.N."/>
            <person name="Benovic J.L."/>
            <person name="Fariss R.N."/>
            <person name="Palczewski K."/>
        </authorList>
    </citation>
    <scope>NUCLEOTIDE SEQUENCE [MRNA]</scope>
    <source>
        <tissue>Retina</tissue>
    </source>
</reference>
<reference key="2">
    <citation type="journal article" date="2004" name="Genome Res.">
        <title>The status, quality, and expansion of the NIH full-length cDNA project: the Mammalian Gene Collection (MGC).</title>
        <authorList>
            <consortium name="The MGC Project Team"/>
        </authorList>
    </citation>
    <scope>NUCLEOTIDE SEQUENCE [LARGE SCALE MRNA]</scope>
    <source>
        <strain>C57BL/6J</strain>
        <tissue>Eye</tissue>
    </source>
</reference>
<reference key="3">
    <citation type="journal article" date="2007" name="J. Physiol. (Lond.)">
        <title>Ca2+-binding proteins tune Ca2+-feedback to Cav1.3 channels in mouse auditory hair cells.</title>
        <authorList>
            <person name="Cui G."/>
            <person name="Meyer A.C."/>
            <person name="Calin-Jageman I."/>
            <person name="Neef J."/>
            <person name="Haeseleer F."/>
            <person name="Moser T."/>
            <person name="Lee A."/>
        </authorList>
    </citation>
    <scope>TISSUE SPECIFICITY</scope>
</reference>
<reference key="4">
    <citation type="journal article" date="2008" name="Invest. Ophthalmol. Vis. Sci.">
        <title>Characterization of Ca2+-binding protein 5 knockout mouse retina.</title>
        <authorList>
            <person name="Rieke F."/>
            <person name="Lee A."/>
            <person name="Haeseleer F."/>
        </authorList>
    </citation>
    <scope>TISSUE SPECIFICITY</scope>
    <scope>FUNCTION</scope>
    <scope>INTERACTION WITH CACNA1C</scope>
    <scope>DISRUPTION PHENOTYPE</scope>
</reference>
<reference key="5">
    <citation type="journal article" date="2011" name="Invest. Ophthalmol. Vis. Sci.">
        <title>Insight into the role of Ca2+-binding protein 5 in vesicle exocytosis.</title>
        <authorList>
            <person name="Sokal I."/>
            <person name="Haeseleer F."/>
        </authorList>
    </citation>
    <scope>FUNCTION</scope>
    <scope>TISSUE SPECIFICITY</scope>
</reference>
<proteinExistence type="evidence at protein level"/>
<dbReference type="EMBL" id="AF169161">
    <property type="protein sequence ID" value="AAF25795.1"/>
    <property type="molecule type" value="mRNA"/>
</dbReference>
<dbReference type="EMBL" id="BC018253">
    <property type="protein sequence ID" value="AAH18253.1"/>
    <property type="molecule type" value="mRNA"/>
</dbReference>
<dbReference type="CCDS" id="CCDS20831.1"/>
<dbReference type="RefSeq" id="NP_038905.1">
    <property type="nucleotide sequence ID" value="NM_013877.4"/>
</dbReference>
<dbReference type="SMR" id="Q9JLK3"/>
<dbReference type="FunCoup" id="Q9JLK3">
    <property type="interactions" value="110"/>
</dbReference>
<dbReference type="STRING" id="10090.ENSMUSP00000005791"/>
<dbReference type="iPTMnet" id="Q9JLK3"/>
<dbReference type="PhosphoSitePlus" id="Q9JLK3"/>
<dbReference type="PaxDb" id="10090-ENSMUSP00000005791"/>
<dbReference type="ProteomicsDB" id="273818"/>
<dbReference type="Antibodypedia" id="49583">
    <property type="antibodies" value="180 antibodies from 23 providers"/>
</dbReference>
<dbReference type="DNASU" id="29865"/>
<dbReference type="Ensembl" id="ENSMUST00000005791.14">
    <property type="protein sequence ID" value="ENSMUSP00000005791.8"/>
    <property type="gene ID" value="ENSMUSG00000005649.18"/>
</dbReference>
<dbReference type="GeneID" id="29865"/>
<dbReference type="KEGG" id="mmu:29865"/>
<dbReference type="UCSC" id="uc009ffv.1">
    <property type="organism name" value="mouse"/>
</dbReference>
<dbReference type="AGR" id="MGI:1352746"/>
<dbReference type="CTD" id="56344"/>
<dbReference type="MGI" id="MGI:1352746">
    <property type="gene designation" value="Cabp5"/>
</dbReference>
<dbReference type="VEuPathDB" id="HostDB:ENSMUSG00000005649"/>
<dbReference type="eggNOG" id="KOG0027">
    <property type="taxonomic scope" value="Eukaryota"/>
</dbReference>
<dbReference type="GeneTree" id="ENSGT00940000160506"/>
<dbReference type="HOGENOM" id="CLU_061288_2_2_1"/>
<dbReference type="InParanoid" id="Q9JLK3"/>
<dbReference type="OMA" id="DFVEMMT"/>
<dbReference type="PhylomeDB" id="Q9JLK3"/>
<dbReference type="TreeFam" id="TF334804"/>
<dbReference type="BioGRID-ORCS" id="29865">
    <property type="hits" value="6 hits in 78 CRISPR screens"/>
</dbReference>
<dbReference type="ChiTaRS" id="Pdia6">
    <property type="organism name" value="mouse"/>
</dbReference>
<dbReference type="PRO" id="PR:Q9JLK3"/>
<dbReference type="Proteomes" id="UP000000589">
    <property type="component" value="Chromosome 7"/>
</dbReference>
<dbReference type="RNAct" id="Q9JLK3">
    <property type="molecule type" value="protein"/>
</dbReference>
<dbReference type="Bgee" id="ENSMUSG00000005649">
    <property type="expression patterns" value="Expressed in retinal neural layer and 19 other cell types or tissues"/>
</dbReference>
<dbReference type="ExpressionAtlas" id="Q9JLK3">
    <property type="expression patterns" value="baseline and differential"/>
</dbReference>
<dbReference type="GO" id="GO:0005829">
    <property type="term" value="C:cytosol"/>
    <property type="evidence" value="ECO:0000266"/>
    <property type="project" value="MGI"/>
</dbReference>
<dbReference type="GO" id="GO:0005509">
    <property type="term" value="F:calcium ion binding"/>
    <property type="evidence" value="ECO:0007669"/>
    <property type="project" value="InterPro"/>
</dbReference>
<dbReference type="CDD" id="cd00051">
    <property type="entry name" value="EFh"/>
    <property type="match status" value="1"/>
</dbReference>
<dbReference type="FunFam" id="1.10.238.10:FF:000069">
    <property type="entry name" value="calcium-binding protein 1 isoform X1"/>
    <property type="match status" value="1"/>
</dbReference>
<dbReference type="FunFam" id="1.10.238.10:FF:000037">
    <property type="entry name" value="calcium-binding protein 1 isoform X2"/>
    <property type="match status" value="1"/>
</dbReference>
<dbReference type="Gene3D" id="1.10.238.10">
    <property type="entry name" value="EF-hand"/>
    <property type="match status" value="2"/>
</dbReference>
<dbReference type="InterPro" id="IPR043582">
    <property type="entry name" value="CaBP1/2/4/5"/>
</dbReference>
<dbReference type="InterPro" id="IPR011992">
    <property type="entry name" value="EF-hand-dom_pair"/>
</dbReference>
<dbReference type="InterPro" id="IPR018247">
    <property type="entry name" value="EF_Hand_1_Ca_BS"/>
</dbReference>
<dbReference type="InterPro" id="IPR002048">
    <property type="entry name" value="EF_hand_dom"/>
</dbReference>
<dbReference type="PANTHER" id="PTHR45917">
    <property type="entry name" value="CALCIUM-BINDING PROTEIN 1-RELATED"/>
    <property type="match status" value="1"/>
</dbReference>
<dbReference type="PANTHER" id="PTHR45917:SF3">
    <property type="entry name" value="CALCIUM-BINDING PROTEIN 5"/>
    <property type="match status" value="1"/>
</dbReference>
<dbReference type="Pfam" id="PF13499">
    <property type="entry name" value="EF-hand_7"/>
    <property type="match status" value="2"/>
</dbReference>
<dbReference type="SMART" id="SM00054">
    <property type="entry name" value="EFh"/>
    <property type="match status" value="3"/>
</dbReference>
<dbReference type="SUPFAM" id="SSF47473">
    <property type="entry name" value="EF-hand"/>
    <property type="match status" value="1"/>
</dbReference>
<dbReference type="PROSITE" id="PS00018">
    <property type="entry name" value="EF_HAND_1"/>
    <property type="match status" value="3"/>
</dbReference>
<dbReference type="PROSITE" id="PS50222">
    <property type="entry name" value="EF_HAND_2"/>
    <property type="match status" value="4"/>
</dbReference>